<gene>
    <name type="primary">STAU1</name>
    <name type="ORF">PANDA_000813</name>
</gene>
<organism>
    <name type="scientific">Ailuropoda melanoleuca</name>
    <name type="common">Giant panda</name>
    <dbReference type="NCBI Taxonomy" id="9646"/>
    <lineage>
        <taxon>Eukaryota</taxon>
        <taxon>Metazoa</taxon>
        <taxon>Chordata</taxon>
        <taxon>Craniata</taxon>
        <taxon>Vertebrata</taxon>
        <taxon>Euteleostomi</taxon>
        <taxon>Mammalia</taxon>
        <taxon>Eutheria</taxon>
        <taxon>Laurasiatheria</taxon>
        <taxon>Carnivora</taxon>
        <taxon>Caniformia</taxon>
        <taxon>Ursidae</taxon>
        <taxon>Ailuropoda</taxon>
    </lineage>
</organism>
<protein>
    <recommendedName>
        <fullName>Double-stranded RNA-binding protein Staufen homolog 1</fullName>
    </recommendedName>
</protein>
<keyword id="KW-0007">Acetylation</keyword>
<keyword id="KW-0963">Cytoplasm</keyword>
<keyword id="KW-0256">Endoplasmic reticulum</keyword>
<keyword id="KW-0488">Methylation</keyword>
<keyword id="KW-0597">Phosphoprotein</keyword>
<keyword id="KW-1185">Reference proteome</keyword>
<keyword id="KW-0677">Repeat</keyword>
<keyword id="KW-0694">RNA-binding</keyword>
<comment type="function">
    <text evidence="1">Binds double-stranded RNA (regardless of the sequence) and tubulin. May play a role in specific positioning of mRNAs at given sites in the cell by cross-linking cytoskeletal and RNA components, and in stimulating their translation at the site (By similarity).</text>
</comment>
<comment type="subunit">
    <text evidence="1">Binds tubulin. Binds with low affinity single-stranded RNA or DNA homopolymers. Interacts with CASC3 in an RNA-dependent manner. Identified in a mRNP complex, at least composed of DHX9, DDX3X, ELAVL1, HNRNPU, IGF2BP1, ILF3, PABPC1, PCBP2, PTBP2, STAU1, STAU2, SYNCRIP and YBX1. Interacts with the influenza virus nonstructural protein NS1.</text>
</comment>
<comment type="subcellular location">
    <subcellularLocation>
        <location evidence="1">Cytoplasm</location>
    </subcellularLocation>
    <subcellularLocation>
        <location evidence="1">Rough endoplasmic reticulum</location>
    </subcellularLocation>
    <text evidence="1">Localizes exclusively with the rough endoplasmic reticulum (RER).</text>
</comment>
<comment type="domain">
    <text evidence="1">One of the DRDB could be involved in RER binding.</text>
</comment>
<comment type="domain">
    <text evidence="1">The C-terminal contains the tubulin binding domain (TBD).</text>
</comment>
<proteinExistence type="inferred from homology"/>
<name>STAU1_AILME</name>
<accession>D2GVP7</accession>
<dbReference type="EMBL" id="GL192351">
    <property type="protein sequence ID" value="EFB26691.1"/>
    <property type="molecule type" value="Genomic_DNA"/>
</dbReference>
<dbReference type="SMR" id="D2GVP7"/>
<dbReference type="STRING" id="9646.ENSAMEP00000014441"/>
<dbReference type="eggNOG" id="KOG3732">
    <property type="taxonomic scope" value="Eukaryota"/>
</dbReference>
<dbReference type="InParanoid" id="D2GVP7"/>
<dbReference type="Proteomes" id="UP000008912">
    <property type="component" value="Unassembled WGS sequence"/>
</dbReference>
<dbReference type="GO" id="GO:0010494">
    <property type="term" value="C:cytoplasmic stress granule"/>
    <property type="evidence" value="ECO:0007669"/>
    <property type="project" value="TreeGrafter"/>
</dbReference>
<dbReference type="GO" id="GO:0032839">
    <property type="term" value="C:dendrite cytoplasm"/>
    <property type="evidence" value="ECO:0007669"/>
    <property type="project" value="GOC"/>
</dbReference>
<dbReference type="GO" id="GO:0043025">
    <property type="term" value="C:neuronal cell body"/>
    <property type="evidence" value="ECO:0007669"/>
    <property type="project" value="TreeGrafter"/>
</dbReference>
<dbReference type="GO" id="GO:0005886">
    <property type="term" value="C:plasma membrane"/>
    <property type="evidence" value="ECO:0007669"/>
    <property type="project" value="TreeGrafter"/>
</dbReference>
<dbReference type="GO" id="GO:0005791">
    <property type="term" value="C:rough endoplasmic reticulum"/>
    <property type="evidence" value="ECO:0007669"/>
    <property type="project" value="UniProtKB-SubCell"/>
</dbReference>
<dbReference type="GO" id="GO:0003725">
    <property type="term" value="F:double-stranded RNA binding"/>
    <property type="evidence" value="ECO:0007669"/>
    <property type="project" value="TreeGrafter"/>
</dbReference>
<dbReference type="GO" id="GO:0003729">
    <property type="term" value="F:mRNA binding"/>
    <property type="evidence" value="ECO:0007669"/>
    <property type="project" value="TreeGrafter"/>
</dbReference>
<dbReference type="GO" id="GO:0098964">
    <property type="term" value="P:anterograde dendritic transport of messenger ribonucleoprotein complex"/>
    <property type="evidence" value="ECO:0007669"/>
    <property type="project" value="TreeGrafter"/>
</dbReference>
<dbReference type="GO" id="GO:0007281">
    <property type="term" value="P:germ cell development"/>
    <property type="evidence" value="ECO:0007669"/>
    <property type="project" value="TreeGrafter"/>
</dbReference>
<dbReference type="GO" id="GO:0008298">
    <property type="term" value="P:intracellular mRNA localization"/>
    <property type="evidence" value="ECO:0007669"/>
    <property type="project" value="TreeGrafter"/>
</dbReference>
<dbReference type="GO" id="GO:0035418">
    <property type="term" value="P:protein localization to synapse"/>
    <property type="evidence" value="ECO:0007669"/>
    <property type="project" value="TreeGrafter"/>
</dbReference>
<dbReference type="CDD" id="cd19881">
    <property type="entry name" value="DSRM_STAU1_rpt2"/>
    <property type="match status" value="1"/>
</dbReference>
<dbReference type="CDD" id="cd19883">
    <property type="entry name" value="DSRM_STAU1_rpt3"/>
    <property type="match status" value="1"/>
</dbReference>
<dbReference type="CDD" id="cd19887">
    <property type="entry name" value="DSRM_STAU1_rpt5"/>
    <property type="match status" value="1"/>
</dbReference>
<dbReference type="FunFam" id="3.30.160.20:FF:000007">
    <property type="entry name" value="Double-stranded RNA-binding protein Staufen homolog 1"/>
    <property type="match status" value="1"/>
</dbReference>
<dbReference type="FunFam" id="3.30.160.20:FF:000014">
    <property type="entry name" value="double-stranded RNA-binding protein Staufen homolog 1 isoform X1"/>
    <property type="match status" value="1"/>
</dbReference>
<dbReference type="FunFam" id="3.30.160.20:FF:000024">
    <property type="entry name" value="double-stranded RNA-binding protein Staufen homolog 1 isoform X1"/>
    <property type="match status" value="1"/>
</dbReference>
<dbReference type="FunFam" id="3.30.160.20:FF:000013">
    <property type="entry name" value="double-stranded RNA-binding protein Staufen homolog 2 isoform X3"/>
    <property type="match status" value="1"/>
</dbReference>
<dbReference type="Gene3D" id="3.30.160.20">
    <property type="match status" value="4"/>
</dbReference>
<dbReference type="Gene3D" id="6.10.250.1360">
    <property type="match status" value="1"/>
</dbReference>
<dbReference type="InterPro" id="IPR051740">
    <property type="entry name" value="DRBM-containing_protein"/>
</dbReference>
<dbReference type="InterPro" id="IPR014720">
    <property type="entry name" value="dsRBD_dom"/>
</dbReference>
<dbReference type="InterPro" id="IPR044475">
    <property type="entry name" value="STAU1_DSRM_3"/>
</dbReference>
<dbReference type="InterPro" id="IPR032478">
    <property type="entry name" value="Staufen_C"/>
</dbReference>
<dbReference type="PANTHER" id="PTHR46054:SF2">
    <property type="entry name" value="DOUBLE-STRANDED RNA-BINDING PROTEIN STAUFEN HOMOLOG 1"/>
    <property type="match status" value="1"/>
</dbReference>
<dbReference type="PANTHER" id="PTHR46054">
    <property type="entry name" value="MATERNAL EFFECT PROTEIN STAUFEN"/>
    <property type="match status" value="1"/>
</dbReference>
<dbReference type="Pfam" id="PF00035">
    <property type="entry name" value="dsrm"/>
    <property type="match status" value="3"/>
</dbReference>
<dbReference type="Pfam" id="PF16482">
    <property type="entry name" value="Staufen_C"/>
    <property type="match status" value="1"/>
</dbReference>
<dbReference type="SMART" id="SM00358">
    <property type="entry name" value="DSRM"/>
    <property type="match status" value="3"/>
</dbReference>
<dbReference type="SUPFAM" id="SSF54768">
    <property type="entry name" value="dsRNA-binding domain-like"/>
    <property type="match status" value="3"/>
</dbReference>
<dbReference type="PROSITE" id="PS50137">
    <property type="entry name" value="DS_RBD"/>
    <property type="match status" value="3"/>
</dbReference>
<sequence>MSQVQVQVQNPSAALSGSQILSKNQSLLSQPLMSIPSTTSSLPSENAGRPIQNSALPSASLTPTSAAAESITPTVELNALCMKLGKKPMYKPVDPYSRMQSTYNYNMRGGAYPPRYFYPFPVPPLLYQVELSVGGQQFNGKGKTRQAAKHDAAAKALRTLQSEPLPERPEGRRPGEQVNGRESEEENLNKSEISQVFEIALKRNLPVNFEVARESGPPHMKSFVTRVSVGEFVGEGEGKSKKISKKNAAIAVLEELKKLPPLPTFERVKPRIKKKTKSIVRLQGSTDCSQGMNPISRLAQIQQAKKEKEPEYLLLTERGLPRRREFVMQVKVGNHTAEGTGTNKKVAKRNAAENMLEILGFKVPQAQPTKPALKSEEKTPIKKPGDGRKVTFFEPGSGDENGTSNKEDEFRLPYLSHQQLPAGILPMVPEVAQAVGVSQGHHTKDFTRVAPNPAKATVTAMIARELLYGGTSPTAETILKNNISSGHVPHGPLTRPSEQLDYLSRVQGFQVEYKDFPKNNKNEFVSLINCSSQPPLISHGIGKDVESCHDMAALNILKLLSELDQPSTEMPRTGNGPMSV</sequence>
<reference key="1">
    <citation type="journal article" date="2010" name="Nature">
        <title>The sequence and de novo assembly of the giant panda genome.</title>
        <authorList>
            <person name="Li R."/>
            <person name="Fan W."/>
            <person name="Tian G."/>
            <person name="Zhu H."/>
            <person name="He L."/>
            <person name="Cai J."/>
            <person name="Huang Q."/>
            <person name="Cai Q."/>
            <person name="Li B."/>
            <person name="Bai Y."/>
            <person name="Zhang Z."/>
            <person name="Zhang Y."/>
            <person name="Wang W."/>
            <person name="Li J."/>
            <person name="Wei F."/>
            <person name="Li H."/>
            <person name="Jian M."/>
            <person name="Li J."/>
            <person name="Zhang Z."/>
            <person name="Nielsen R."/>
            <person name="Li D."/>
            <person name="Gu W."/>
            <person name="Yang Z."/>
            <person name="Xuan Z."/>
            <person name="Ryder O.A."/>
            <person name="Leung F.C."/>
            <person name="Zhou Y."/>
            <person name="Cao J."/>
            <person name="Sun X."/>
            <person name="Fu Y."/>
            <person name="Fang X."/>
            <person name="Guo X."/>
            <person name="Wang B."/>
            <person name="Hou R."/>
            <person name="Shen F."/>
            <person name="Mu B."/>
            <person name="Ni P."/>
            <person name="Lin R."/>
            <person name="Qian W."/>
            <person name="Wang G."/>
            <person name="Yu C."/>
            <person name="Nie W."/>
            <person name="Wang J."/>
            <person name="Wu Z."/>
            <person name="Liang H."/>
            <person name="Min J."/>
            <person name="Wu Q."/>
            <person name="Cheng S."/>
            <person name="Ruan J."/>
            <person name="Wang M."/>
            <person name="Shi Z."/>
            <person name="Wen M."/>
            <person name="Liu B."/>
            <person name="Ren X."/>
            <person name="Zheng H."/>
            <person name="Dong D."/>
            <person name="Cook K."/>
            <person name="Shan G."/>
            <person name="Zhang H."/>
            <person name="Kosiol C."/>
            <person name="Xie X."/>
            <person name="Lu Z."/>
            <person name="Zheng H."/>
            <person name="Li Y."/>
            <person name="Steiner C.C."/>
            <person name="Lam T.T."/>
            <person name="Lin S."/>
            <person name="Zhang Q."/>
            <person name="Li G."/>
            <person name="Tian J."/>
            <person name="Gong T."/>
            <person name="Liu H."/>
            <person name="Zhang D."/>
            <person name="Fang L."/>
            <person name="Ye C."/>
            <person name="Zhang J."/>
            <person name="Hu W."/>
            <person name="Xu A."/>
            <person name="Ren Y."/>
            <person name="Zhang G."/>
            <person name="Bruford M.W."/>
            <person name="Li Q."/>
            <person name="Ma L."/>
            <person name="Guo Y."/>
            <person name="An N."/>
            <person name="Hu Y."/>
            <person name="Zheng Y."/>
            <person name="Shi Y."/>
            <person name="Li Z."/>
            <person name="Liu Q."/>
            <person name="Chen Y."/>
            <person name="Zhao J."/>
            <person name="Qu N."/>
            <person name="Zhao S."/>
            <person name="Tian F."/>
            <person name="Wang X."/>
            <person name="Wang H."/>
            <person name="Xu L."/>
            <person name="Liu X."/>
            <person name="Vinar T."/>
            <person name="Wang Y."/>
            <person name="Lam T.W."/>
            <person name="Yiu S.M."/>
            <person name="Liu S."/>
            <person name="Zhang H."/>
            <person name="Li D."/>
            <person name="Huang Y."/>
            <person name="Wang X."/>
            <person name="Yang G."/>
            <person name="Jiang Z."/>
            <person name="Wang J."/>
            <person name="Qin N."/>
            <person name="Li L."/>
            <person name="Li J."/>
            <person name="Bolund L."/>
            <person name="Kristiansen K."/>
            <person name="Wong G.K."/>
            <person name="Olson M."/>
            <person name="Zhang X."/>
            <person name="Li S."/>
            <person name="Yang H."/>
            <person name="Wang J."/>
            <person name="Wang J."/>
        </authorList>
    </citation>
    <scope>NUCLEOTIDE SEQUENCE [LARGE SCALE GENOMIC DNA]</scope>
</reference>
<evidence type="ECO:0000250" key="1"/>
<evidence type="ECO:0000250" key="2">
    <source>
        <dbReference type="UniProtKB" id="O95793"/>
    </source>
</evidence>
<evidence type="ECO:0000255" key="3">
    <source>
        <dbReference type="PROSITE-ProRule" id="PRU00266"/>
    </source>
</evidence>
<evidence type="ECO:0000256" key="4">
    <source>
        <dbReference type="SAM" id="MobiDB-lite"/>
    </source>
</evidence>
<feature type="initiator methionine" description="Removed" evidence="2">
    <location>
        <position position="1"/>
    </location>
</feature>
<feature type="chain" id="PRO_0000405778" description="Double-stranded RNA-binding protein Staufen homolog 1">
    <location>
        <begin position="2"/>
        <end position="580"/>
    </location>
</feature>
<feature type="domain" description="DRBM 1" evidence="3">
    <location>
        <begin position="72"/>
        <end position="162"/>
    </location>
</feature>
<feature type="domain" description="DRBM 2" evidence="3">
    <location>
        <begin position="191"/>
        <end position="258"/>
    </location>
</feature>
<feature type="domain" description="DRBM 3" evidence="3">
    <location>
        <begin position="293"/>
        <end position="361"/>
    </location>
</feature>
<feature type="region of interest" description="Disordered" evidence="4">
    <location>
        <begin position="34"/>
        <end position="59"/>
    </location>
</feature>
<feature type="region of interest" description="Disordered" evidence="4">
    <location>
        <begin position="158"/>
        <end position="189"/>
    </location>
</feature>
<feature type="region of interest" description="Disordered" evidence="4">
    <location>
        <begin position="367"/>
        <end position="404"/>
    </location>
</feature>
<feature type="compositionally biased region" description="Polar residues" evidence="4">
    <location>
        <begin position="34"/>
        <end position="44"/>
    </location>
</feature>
<feature type="compositionally biased region" description="Basic and acidic residues" evidence="4">
    <location>
        <begin position="165"/>
        <end position="182"/>
    </location>
</feature>
<feature type="compositionally biased region" description="Basic and acidic residues" evidence="4">
    <location>
        <begin position="373"/>
        <end position="391"/>
    </location>
</feature>
<feature type="modified residue" description="N-acetylserine" evidence="2">
    <location>
        <position position="2"/>
    </location>
</feature>
<feature type="modified residue" description="Asymmetric dimethylarginine" evidence="2">
    <location>
        <position position="108"/>
    </location>
</feature>
<feature type="modified residue" description="Asymmetric dimethylarginine; alternate" evidence="2">
    <location>
        <position position="115"/>
    </location>
</feature>
<feature type="modified residue" description="Omega-N-methylarginine; alternate" evidence="2">
    <location>
        <position position="115"/>
    </location>
</feature>
<feature type="modified residue" description="Phosphoserine" evidence="2">
    <location>
        <position position="183"/>
    </location>
</feature>
<feature type="modified residue" description="Phosphoserine" evidence="2">
    <location>
        <position position="285"/>
    </location>
</feature>
<feature type="modified residue" description="Phosphoserine" evidence="2">
    <location>
        <position position="397"/>
    </location>
</feature>